<feature type="chain" id="PRO_1000096047" description="Bifunctional purine biosynthesis protein PurH">
    <location>
        <begin position="1"/>
        <end position="521"/>
    </location>
</feature>
<feature type="domain" description="MGS-like" evidence="2">
    <location>
        <begin position="1"/>
        <end position="145"/>
    </location>
</feature>
<keyword id="KW-0378">Hydrolase</keyword>
<keyword id="KW-0511">Multifunctional enzyme</keyword>
<keyword id="KW-0658">Purine biosynthesis</keyword>
<keyword id="KW-1185">Reference proteome</keyword>
<keyword id="KW-0808">Transferase</keyword>
<comment type="catalytic activity">
    <reaction evidence="1">
        <text>(6R)-10-formyltetrahydrofolate + 5-amino-1-(5-phospho-beta-D-ribosyl)imidazole-4-carboxamide = 5-formamido-1-(5-phospho-D-ribosyl)imidazole-4-carboxamide + (6S)-5,6,7,8-tetrahydrofolate</text>
        <dbReference type="Rhea" id="RHEA:22192"/>
        <dbReference type="ChEBI" id="CHEBI:57453"/>
        <dbReference type="ChEBI" id="CHEBI:58467"/>
        <dbReference type="ChEBI" id="CHEBI:58475"/>
        <dbReference type="ChEBI" id="CHEBI:195366"/>
        <dbReference type="EC" id="2.1.2.3"/>
    </reaction>
</comment>
<comment type="catalytic activity">
    <reaction evidence="1">
        <text>IMP + H2O = 5-formamido-1-(5-phospho-D-ribosyl)imidazole-4-carboxamide</text>
        <dbReference type="Rhea" id="RHEA:18445"/>
        <dbReference type="ChEBI" id="CHEBI:15377"/>
        <dbReference type="ChEBI" id="CHEBI:58053"/>
        <dbReference type="ChEBI" id="CHEBI:58467"/>
        <dbReference type="EC" id="3.5.4.10"/>
    </reaction>
</comment>
<comment type="pathway">
    <text evidence="1">Purine metabolism; IMP biosynthesis via de novo pathway; 5-formamido-1-(5-phospho-D-ribosyl)imidazole-4-carboxamide from 5-amino-1-(5-phospho-D-ribosyl)imidazole-4-carboxamide (10-formyl THF route): step 1/1.</text>
</comment>
<comment type="pathway">
    <text evidence="1">Purine metabolism; IMP biosynthesis via de novo pathway; IMP from 5-formamido-1-(5-phospho-D-ribosyl)imidazole-4-carboxamide: step 1/1.</text>
</comment>
<comment type="domain">
    <text evidence="1">The IMP cyclohydrolase activity resides in the N-terminal region.</text>
</comment>
<comment type="similarity">
    <text evidence="1">Belongs to the PurH family.</text>
</comment>
<organism>
    <name type="scientific">Paraburkholderia phymatum (strain DSM 17167 / CIP 108236 / LMG 21445 / STM815)</name>
    <name type="common">Burkholderia phymatum</name>
    <dbReference type="NCBI Taxonomy" id="391038"/>
    <lineage>
        <taxon>Bacteria</taxon>
        <taxon>Pseudomonadati</taxon>
        <taxon>Pseudomonadota</taxon>
        <taxon>Betaproteobacteria</taxon>
        <taxon>Burkholderiales</taxon>
        <taxon>Burkholderiaceae</taxon>
        <taxon>Paraburkholderia</taxon>
    </lineage>
</organism>
<reference key="1">
    <citation type="journal article" date="2014" name="Stand. Genomic Sci.">
        <title>Complete genome sequence of Burkholderia phymatum STM815(T), a broad host range and efficient nitrogen-fixing symbiont of Mimosa species.</title>
        <authorList>
            <person name="Moulin L."/>
            <person name="Klonowska A."/>
            <person name="Caroline B."/>
            <person name="Booth K."/>
            <person name="Vriezen J.A."/>
            <person name="Melkonian R."/>
            <person name="James E.K."/>
            <person name="Young J.P."/>
            <person name="Bena G."/>
            <person name="Hauser L."/>
            <person name="Land M."/>
            <person name="Kyrpides N."/>
            <person name="Bruce D."/>
            <person name="Chain P."/>
            <person name="Copeland A."/>
            <person name="Pitluck S."/>
            <person name="Woyke T."/>
            <person name="Lizotte-Waniewski M."/>
            <person name="Bristow J."/>
            <person name="Riley M."/>
        </authorList>
    </citation>
    <scope>NUCLEOTIDE SEQUENCE [LARGE SCALE GENOMIC DNA]</scope>
    <source>
        <strain>DSM 17167 / CIP 108236 / LMG 21445 / STM815</strain>
    </source>
</reference>
<proteinExistence type="inferred from homology"/>
<accession>B2JGU1</accession>
<evidence type="ECO:0000255" key="1">
    <source>
        <dbReference type="HAMAP-Rule" id="MF_00139"/>
    </source>
</evidence>
<evidence type="ECO:0000255" key="2">
    <source>
        <dbReference type="PROSITE-ProRule" id="PRU01202"/>
    </source>
</evidence>
<protein>
    <recommendedName>
        <fullName evidence="1">Bifunctional purine biosynthesis protein PurH</fullName>
    </recommendedName>
    <domain>
        <recommendedName>
            <fullName evidence="1">Phosphoribosylaminoimidazolecarboxamide formyltransferase</fullName>
            <ecNumber evidence="1">2.1.2.3</ecNumber>
        </recommendedName>
        <alternativeName>
            <fullName evidence="1">AICAR transformylase</fullName>
        </alternativeName>
    </domain>
    <domain>
        <recommendedName>
            <fullName evidence="1">IMP cyclohydrolase</fullName>
            <ecNumber evidence="1">3.5.4.10</ecNumber>
        </recommendedName>
        <alternativeName>
            <fullName evidence="1">ATIC</fullName>
        </alternativeName>
        <alternativeName>
            <fullName evidence="1">IMP synthase</fullName>
        </alternativeName>
        <alternativeName>
            <fullName evidence="1">Inosinicase</fullName>
        </alternativeName>
    </domain>
</protein>
<dbReference type="EC" id="2.1.2.3" evidence="1"/>
<dbReference type="EC" id="3.5.4.10" evidence="1"/>
<dbReference type="EMBL" id="CP001043">
    <property type="protein sequence ID" value="ACC71725.1"/>
    <property type="molecule type" value="Genomic_DNA"/>
</dbReference>
<dbReference type="RefSeq" id="WP_012401928.1">
    <property type="nucleotide sequence ID" value="NC_010622.1"/>
</dbReference>
<dbReference type="SMR" id="B2JGU1"/>
<dbReference type="STRING" id="391038.Bphy_2553"/>
<dbReference type="KEGG" id="bph:Bphy_2553"/>
<dbReference type="eggNOG" id="COG0138">
    <property type="taxonomic scope" value="Bacteria"/>
</dbReference>
<dbReference type="HOGENOM" id="CLU_016316_5_2_4"/>
<dbReference type="OrthoDB" id="9802065at2"/>
<dbReference type="UniPathway" id="UPA00074">
    <property type="reaction ID" value="UER00133"/>
</dbReference>
<dbReference type="UniPathway" id="UPA00074">
    <property type="reaction ID" value="UER00135"/>
</dbReference>
<dbReference type="Proteomes" id="UP000001192">
    <property type="component" value="Chromosome 1"/>
</dbReference>
<dbReference type="GO" id="GO:0005829">
    <property type="term" value="C:cytosol"/>
    <property type="evidence" value="ECO:0007669"/>
    <property type="project" value="TreeGrafter"/>
</dbReference>
<dbReference type="GO" id="GO:0003937">
    <property type="term" value="F:IMP cyclohydrolase activity"/>
    <property type="evidence" value="ECO:0007669"/>
    <property type="project" value="UniProtKB-UniRule"/>
</dbReference>
<dbReference type="GO" id="GO:0004643">
    <property type="term" value="F:phosphoribosylaminoimidazolecarboxamide formyltransferase activity"/>
    <property type="evidence" value="ECO:0007669"/>
    <property type="project" value="UniProtKB-UniRule"/>
</dbReference>
<dbReference type="GO" id="GO:0006189">
    <property type="term" value="P:'de novo' IMP biosynthetic process"/>
    <property type="evidence" value="ECO:0007669"/>
    <property type="project" value="UniProtKB-UniRule"/>
</dbReference>
<dbReference type="CDD" id="cd01421">
    <property type="entry name" value="IMPCH"/>
    <property type="match status" value="1"/>
</dbReference>
<dbReference type="FunFam" id="3.40.140.20:FF:000001">
    <property type="entry name" value="Bifunctional purine biosynthesis protein PurH"/>
    <property type="match status" value="1"/>
</dbReference>
<dbReference type="FunFam" id="3.40.140.20:FF:000002">
    <property type="entry name" value="Bifunctional purine biosynthesis protein PurH"/>
    <property type="match status" value="1"/>
</dbReference>
<dbReference type="FunFam" id="3.40.50.1380:FF:000001">
    <property type="entry name" value="Bifunctional purine biosynthesis protein PurH"/>
    <property type="match status" value="1"/>
</dbReference>
<dbReference type="Gene3D" id="3.40.140.20">
    <property type="match status" value="2"/>
</dbReference>
<dbReference type="Gene3D" id="3.40.50.1380">
    <property type="entry name" value="Methylglyoxal synthase-like domain"/>
    <property type="match status" value="1"/>
</dbReference>
<dbReference type="HAMAP" id="MF_00139">
    <property type="entry name" value="PurH"/>
    <property type="match status" value="1"/>
</dbReference>
<dbReference type="InterPro" id="IPR024051">
    <property type="entry name" value="AICAR_Tfase_dup_dom_sf"/>
</dbReference>
<dbReference type="InterPro" id="IPR016193">
    <property type="entry name" value="Cytidine_deaminase-like"/>
</dbReference>
<dbReference type="InterPro" id="IPR011607">
    <property type="entry name" value="MGS-like_dom"/>
</dbReference>
<dbReference type="InterPro" id="IPR036914">
    <property type="entry name" value="MGS-like_dom_sf"/>
</dbReference>
<dbReference type="InterPro" id="IPR002695">
    <property type="entry name" value="PurH-like"/>
</dbReference>
<dbReference type="NCBIfam" id="NF002049">
    <property type="entry name" value="PRK00881.1"/>
    <property type="match status" value="1"/>
</dbReference>
<dbReference type="NCBIfam" id="TIGR00355">
    <property type="entry name" value="purH"/>
    <property type="match status" value="1"/>
</dbReference>
<dbReference type="PANTHER" id="PTHR11692:SF0">
    <property type="entry name" value="BIFUNCTIONAL PURINE BIOSYNTHESIS PROTEIN ATIC"/>
    <property type="match status" value="1"/>
</dbReference>
<dbReference type="PANTHER" id="PTHR11692">
    <property type="entry name" value="BIFUNCTIONAL PURINE BIOSYNTHESIS PROTEIN PURH"/>
    <property type="match status" value="1"/>
</dbReference>
<dbReference type="Pfam" id="PF01808">
    <property type="entry name" value="AICARFT_IMPCHas"/>
    <property type="match status" value="1"/>
</dbReference>
<dbReference type="Pfam" id="PF02142">
    <property type="entry name" value="MGS"/>
    <property type="match status" value="1"/>
</dbReference>
<dbReference type="PIRSF" id="PIRSF000414">
    <property type="entry name" value="AICARFT_IMPCHas"/>
    <property type="match status" value="1"/>
</dbReference>
<dbReference type="SMART" id="SM00798">
    <property type="entry name" value="AICARFT_IMPCHas"/>
    <property type="match status" value="1"/>
</dbReference>
<dbReference type="SMART" id="SM00851">
    <property type="entry name" value="MGS"/>
    <property type="match status" value="1"/>
</dbReference>
<dbReference type="SUPFAM" id="SSF53927">
    <property type="entry name" value="Cytidine deaminase-like"/>
    <property type="match status" value="1"/>
</dbReference>
<dbReference type="SUPFAM" id="SSF52335">
    <property type="entry name" value="Methylglyoxal synthase-like"/>
    <property type="match status" value="1"/>
</dbReference>
<dbReference type="PROSITE" id="PS51855">
    <property type="entry name" value="MGS"/>
    <property type="match status" value="1"/>
</dbReference>
<sequence length="521" mass="56217">MIKQALISVSDKSGIVDFAKSLSDLGVKILSTGGTAKLLADAGLPVTEVADYTGFPEMLDGRVKTLHPKVHGGILARRDLPEHMAALEKHDIPTIDLLVVNLYPFVQTVSKEECTLEDAIENIDIGGPTMLRSAAKNHRDVTVVVDPADYATVLDEMRANGNTVGYKTNFRLATKVFAHTAQYDGAITNYLTSLTEQLQHRDRNTYPATLNMAFEKVQDLRYGENPHQSAAFYRDIAAPAGALANYRQLQGKELSYNNIADSDAAWECVKTFDAPACVIIKHANPCGVAVGANPHEAYSKAFQTDPTSAFGGIIAFNREVDETAAQAVAKQFVEVLIAPSFSEAAKQLFAAKQNVRLLEIALGEGHNAFDLKRVGGGLLVQSLDAKNVQPHELRVVTKRHPTPKEMDDLLFAWRVAKFVKSNAIVFCANGMTMGVGAGQMSRVDSARIASIKAQNAGLTLSGTAVASDAFFPFRDGLDVVVNAGATCVIQPGGSMRDDEVIAAADEHNIAMVVTGIRHFRH</sequence>
<gene>
    <name evidence="1" type="primary">purH</name>
    <name type="ordered locus">Bphy_2553</name>
</gene>
<name>PUR9_PARP8</name>